<reference key="1">
    <citation type="journal article" date="2009" name="Appl. Environ. Microbiol.">
        <title>Complete genome sequence of the chemolithoautotrophic marine magnetotactic coccus strain MC-1.</title>
        <authorList>
            <person name="Schubbe S."/>
            <person name="Williams T.J."/>
            <person name="Xie G."/>
            <person name="Kiss H.E."/>
            <person name="Brettin T.S."/>
            <person name="Martinez D."/>
            <person name="Ross C.A."/>
            <person name="Schuler D."/>
            <person name="Cox B.L."/>
            <person name="Nealson K.H."/>
            <person name="Bazylinski D.A."/>
        </authorList>
    </citation>
    <scope>NUCLEOTIDE SEQUENCE [LARGE SCALE GENOMIC DNA]</scope>
    <source>
        <strain>ATCC BAA-1437 / JCM 17883 / MC-1</strain>
    </source>
</reference>
<sequence length="128" mass="14769">MSSPEKVEPQRAILESFANPNPQRDYEIDMHCPEFTCLCPKTGQPDFADFRITYVADEKCIELKSLKIYMWSFRDRGAFHEAVTNQIMDDLIAVCDPRYMQVQGAFYVRGGITTTITVEHHKERSTEA</sequence>
<protein>
    <recommendedName>
        <fullName evidence="1">NADPH-dependent 7-cyano-7-deazaguanine reductase</fullName>
        <ecNumber evidence="1">1.7.1.13</ecNumber>
    </recommendedName>
    <alternativeName>
        <fullName evidence="1">7-cyano-7-carbaguanine reductase</fullName>
    </alternativeName>
    <alternativeName>
        <fullName evidence="1">NADPH-dependent nitrile oxidoreductase</fullName>
    </alternativeName>
    <alternativeName>
        <fullName evidence="1">PreQ(0) reductase</fullName>
    </alternativeName>
</protein>
<organism>
    <name type="scientific">Magnetococcus marinus (strain ATCC BAA-1437 / JCM 17883 / MC-1)</name>
    <dbReference type="NCBI Taxonomy" id="156889"/>
    <lineage>
        <taxon>Bacteria</taxon>
        <taxon>Pseudomonadati</taxon>
        <taxon>Pseudomonadota</taxon>
        <taxon>Alphaproteobacteria</taxon>
        <taxon>Magnetococcales</taxon>
        <taxon>Magnetococcaceae</taxon>
        <taxon>Magnetococcus</taxon>
    </lineage>
</organism>
<gene>
    <name evidence="1" type="primary">queF</name>
    <name type="ordered locus">Mmc1_3421</name>
</gene>
<name>QUEF_MAGMM</name>
<accession>A0LD64</accession>
<evidence type="ECO:0000255" key="1">
    <source>
        <dbReference type="HAMAP-Rule" id="MF_00818"/>
    </source>
</evidence>
<proteinExistence type="inferred from homology"/>
<dbReference type="EC" id="1.7.1.13" evidence="1"/>
<dbReference type="EMBL" id="CP000471">
    <property type="protein sequence ID" value="ABK45907.1"/>
    <property type="molecule type" value="Genomic_DNA"/>
</dbReference>
<dbReference type="RefSeq" id="WP_011714964.1">
    <property type="nucleotide sequence ID" value="NC_008576.1"/>
</dbReference>
<dbReference type="SMR" id="A0LD64"/>
<dbReference type="STRING" id="156889.Mmc1_3421"/>
<dbReference type="KEGG" id="mgm:Mmc1_3421"/>
<dbReference type="eggNOG" id="COG0780">
    <property type="taxonomic scope" value="Bacteria"/>
</dbReference>
<dbReference type="HOGENOM" id="CLU_102489_1_0_5"/>
<dbReference type="OrthoDB" id="9789995at2"/>
<dbReference type="UniPathway" id="UPA00392"/>
<dbReference type="Proteomes" id="UP000002586">
    <property type="component" value="Chromosome"/>
</dbReference>
<dbReference type="GO" id="GO:0005737">
    <property type="term" value="C:cytoplasm"/>
    <property type="evidence" value="ECO:0007669"/>
    <property type="project" value="UniProtKB-SubCell"/>
</dbReference>
<dbReference type="GO" id="GO:0033739">
    <property type="term" value="F:preQ1 synthase activity"/>
    <property type="evidence" value="ECO:0007669"/>
    <property type="project" value="UniProtKB-UniRule"/>
</dbReference>
<dbReference type="GO" id="GO:0008616">
    <property type="term" value="P:queuosine biosynthetic process"/>
    <property type="evidence" value="ECO:0007669"/>
    <property type="project" value="UniProtKB-UniRule"/>
</dbReference>
<dbReference type="GO" id="GO:0006400">
    <property type="term" value="P:tRNA modification"/>
    <property type="evidence" value="ECO:0007669"/>
    <property type="project" value="UniProtKB-UniRule"/>
</dbReference>
<dbReference type="Gene3D" id="3.30.1130.10">
    <property type="match status" value="1"/>
</dbReference>
<dbReference type="HAMAP" id="MF_00818">
    <property type="entry name" value="QueF_type1"/>
    <property type="match status" value="1"/>
</dbReference>
<dbReference type="InterPro" id="IPR043133">
    <property type="entry name" value="GTP-CH-I_C/QueF"/>
</dbReference>
<dbReference type="InterPro" id="IPR050084">
    <property type="entry name" value="NADPH_dep_7-cyano-7-deazaG_red"/>
</dbReference>
<dbReference type="InterPro" id="IPR029500">
    <property type="entry name" value="QueF"/>
</dbReference>
<dbReference type="InterPro" id="IPR016856">
    <property type="entry name" value="QueF_type1"/>
</dbReference>
<dbReference type="NCBIfam" id="TIGR03139">
    <property type="entry name" value="QueF-II"/>
    <property type="match status" value="1"/>
</dbReference>
<dbReference type="PANTHER" id="PTHR34354">
    <property type="entry name" value="NADPH-DEPENDENT 7-CYANO-7-DEAZAGUANINE REDUCTASE"/>
    <property type="match status" value="1"/>
</dbReference>
<dbReference type="PANTHER" id="PTHR34354:SF1">
    <property type="entry name" value="NADPH-DEPENDENT 7-CYANO-7-DEAZAGUANINE REDUCTASE"/>
    <property type="match status" value="1"/>
</dbReference>
<dbReference type="Pfam" id="PF14489">
    <property type="entry name" value="QueF"/>
    <property type="match status" value="1"/>
</dbReference>
<dbReference type="PIRSF" id="PIRSF027377">
    <property type="entry name" value="Nitrile_oxidored_QueF"/>
    <property type="match status" value="1"/>
</dbReference>
<dbReference type="SUPFAM" id="SSF55620">
    <property type="entry name" value="Tetrahydrobiopterin biosynthesis enzymes-like"/>
    <property type="match status" value="1"/>
</dbReference>
<keyword id="KW-0963">Cytoplasm</keyword>
<keyword id="KW-0521">NADP</keyword>
<keyword id="KW-0560">Oxidoreductase</keyword>
<keyword id="KW-0671">Queuosine biosynthesis</keyword>
<keyword id="KW-1185">Reference proteome</keyword>
<comment type="function">
    <text evidence="1">Catalyzes the NADPH-dependent reduction of 7-cyano-7-deazaguanine (preQ0) to 7-aminomethyl-7-deazaguanine (preQ1).</text>
</comment>
<comment type="catalytic activity">
    <reaction evidence="1">
        <text>7-aminomethyl-7-carbaguanine + 2 NADP(+) = 7-cyano-7-deazaguanine + 2 NADPH + 3 H(+)</text>
        <dbReference type="Rhea" id="RHEA:13409"/>
        <dbReference type="ChEBI" id="CHEBI:15378"/>
        <dbReference type="ChEBI" id="CHEBI:45075"/>
        <dbReference type="ChEBI" id="CHEBI:57783"/>
        <dbReference type="ChEBI" id="CHEBI:58349"/>
        <dbReference type="ChEBI" id="CHEBI:58703"/>
        <dbReference type="EC" id="1.7.1.13"/>
    </reaction>
</comment>
<comment type="pathway">
    <text evidence="1">tRNA modification; tRNA-queuosine biosynthesis.</text>
</comment>
<comment type="subcellular location">
    <subcellularLocation>
        <location evidence="1">Cytoplasm</location>
    </subcellularLocation>
</comment>
<comment type="similarity">
    <text evidence="1">Belongs to the GTP cyclohydrolase I family. QueF type 1 subfamily.</text>
</comment>
<feature type="chain" id="PRO_1000148673" description="NADPH-dependent 7-cyano-7-deazaguanine reductase">
    <location>
        <begin position="1"/>
        <end position="128"/>
    </location>
</feature>
<feature type="active site" description="Thioimide intermediate" evidence="1">
    <location>
        <position position="39"/>
    </location>
</feature>
<feature type="active site" description="Proton donor" evidence="1">
    <location>
        <position position="46"/>
    </location>
</feature>
<feature type="binding site" evidence="1">
    <location>
        <begin position="61"/>
        <end position="63"/>
    </location>
    <ligand>
        <name>substrate</name>
    </ligand>
</feature>
<feature type="binding site" evidence="1">
    <location>
        <begin position="80"/>
        <end position="81"/>
    </location>
    <ligand>
        <name>substrate</name>
    </ligand>
</feature>